<gene>
    <name evidence="6" type="primary">rok</name>
    <name type="synonym">ykuW</name>
    <name type="ordered locus">BSU14240</name>
</gene>
<evidence type="ECO:0000255" key="1"/>
<evidence type="ECO:0000256" key="2">
    <source>
        <dbReference type="SAM" id="MobiDB-lite"/>
    </source>
</evidence>
<evidence type="ECO:0000269" key="3">
    <source>
    </source>
</evidence>
<evidence type="ECO:0000269" key="4">
    <source>
    </source>
</evidence>
<evidence type="ECO:0000269" key="5">
    <source>
    </source>
</evidence>
<evidence type="ECO:0000303" key="6">
    <source>
    </source>
</evidence>
<evidence type="ECO:0000305" key="7">
    <source>
    </source>
</evidence>
<evidence type="ECO:0007829" key="8">
    <source>
        <dbReference type="PDB" id="5ZUX"/>
    </source>
</evidence>
<evidence type="ECO:0007829" key="9">
    <source>
        <dbReference type="PDB" id="5ZUZ"/>
    </source>
</evidence>
<proteinExistence type="evidence at protein level"/>
<accession>O34857</accession>
<organism>
    <name type="scientific">Bacillus subtilis (strain 168)</name>
    <dbReference type="NCBI Taxonomy" id="224308"/>
    <lineage>
        <taxon>Bacteria</taxon>
        <taxon>Bacillati</taxon>
        <taxon>Bacillota</taxon>
        <taxon>Bacilli</taxon>
        <taxon>Bacillales</taxon>
        <taxon>Bacillaceae</taxon>
        <taxon>Bacillus</taxon>
    </lineage>
</organism>
<dbReference type="EMBL" id="AJ222587">
    <property type="protein sequence ID" value="CAA10886.1"/>
    <property type="molecule type" value="Genomic_DNA"/>
</dbReference>
<dbReference type="EMBL" id="AL009126">
    <property type="protein sequence ID" value="CAB13297.1"/>
    <property type="molecule type" value="Genomic_DNA"/>
</dbReference>
<dbReference type="PIR" id="D69867">
    <property type="entry name" value="D69867"/>
</dbReference>
<dbReference type="RefSeq" id="NP_389307.1">
    <property type="nucleotide sequence ID" value="NC_000964.3"/>
</dbReference>
<dbReference type="RefSeq" id="WP_003232378.1">
    <property type="nucleotide sequence ID" value="NZ_OZ025638.1"/>
</dbReference>
<dbReference type="PDB" id="5ZUX">
    <property type="method" value="NMR"/>
    <property type="chains" value="A=102-187"/>
</dbReference>
<dbReference type="PDB" id="5ZUZ">
    <property type="method" value="NMR"/>
    <property type="chains" value="A=97-191"/>
</dbReference>
<dbReference type="PDBsum" id="5ZUX"/>
<dbReference type="PDBsum" id="5ZUZ"/>
<dbReference type="BMRB" id="O34857"/>
<dbReference type="SMR" id="O34857"/>
<dbReference type="FunCoup" id="O34857">
    <property type="interactions" value="10"/>
</dbReference>
<dbReference type="STRING" id="224308.BSU14240"/>
<dbReference type="jPOST" id="O34857"/>
<dbReference type="PaxDb" id="224308-BSU14240"/>
<dbReference type="EnsemblBacteria" id="CAB13297">
    <property type="protein sequence ID" value="CAB13297"/>
    <property type="gene ID" value="BSU_14240"/>
</dbReference>
<dbReference type="GeneID" id="938793"/>
<dbReference type="KEGG" id="bsu:BSU14240"/>
<dbReference type="PATRIC" id="fig|224308.179.peg.1554"/>
<dbReference type="eggNOG" id="ENOG502ZXGY">
    <property type="taxonomic scope" value="Bacteria"/>
</dbReference>
<dbReference type="InParanoid" id="O34857"/>
<dbReference type="OrthoDB" id="2452961at2"/>
<dbReference type="BioCyc" id="BSUB:BSU14240-MONOMER"/>
<dbReference type="Proteomes" id="UP000001570">
    <property type="component" value="Chromosome"/>
</dbReference>
<dbReference type="GO" id="GO:0005737">
    <property type="term" value="C:cytoplasm"/>
    <property type="evidence" value="ECO:0007669"/>
    <property type="project" value="UniProtKB-KW"/>
</dbReference>
<dbReference type="GO" id="GO:0009295">
    <property type="term" value="C:nucleoid"/>
    <property type="evidence" value="ECO:0007669"/>
    <property type="project" value="UniProtKB-SubCell"/>
</dbReference>
<dbReference type="GO" id="GO:0003677">
    <property type="term" value="F:DNA binding"/>
    <property type="evidence" value="ECO:0007669"/>
    <property type="project" value="UniProtKB-KW"/>
</dbReference>
<dbReference type="InterPro" id="IPR056984">
    <property type="entry name" value="WH_Rok"/>
</dbReference>
<dbReference type="Pfam" id="PF23159">
    <property type="entry name" value="WH_Rok"/>
    <property type="match status" value="1"/>
</dbReference>
<comment type="function">
    <text evidence="3 4 5">Repressor of comK, the master regulator of competence development (PubMed:11849533). Overexpression seems to be lethal (PubMed:11849533). Represses at least 20 genes that specify membrane-localized and secreted proteins, including some that encode products with antibiotic activity (PubMed:15743949). Binds to many AT-rich sites in the chromosome, many of which are known or thought to derive from horizontal gene transfer; helps keep mobile element ICEBs1 quiescent in the genome (PubMed:21085634). Binds to its own promoter and is thus probably autoregulatory (PubMed:21085634).</text>
</comment>
<comment type="subcellular location">
    <subcellularLocation>
        <location evidence="5">Cytoplasm</location>
        <location evidence="5">Nucleoid</location>
    </subcellularLocation>
    <text evidence="5">Not uniformly distributed in the nucleoid, it forms several clusters (PubMed:21085634).</text>
</comment>
<comment type="induction">
    <text evidence="3 5 7">Expression is constant during late log phase and for at least 2 hours in stationary phase (at protein level) (PubMed:11849533). Probably repressed by AbrB and SinR, as well as partially by ComK (PubMed:11849533). Probably negatively regulates its own expression (PubMed:11849533, PubMed:21085634). There are 1000-3000 proteins/chromosome in exponential phase grown in minimal medium (PubMed:21085634).</text>
</comment>
<comment type="domain">
    <text evidence="5">The C-terminus (residues 95-191) binds DNA (PubMed:21085634).</text>
</comment>
<comment type="disruption phenotype">
    <text evidence="3 5">Increased expression of comK, increases transformation about 5-fold, decreases sporulation efficiency about 5-fold (PubMed:11849533). Increased excision of mobile element ICEBs1 (PubMed:21085634).</text>
</comment>
<protein>
    <recommendedName>
        <fullName>Repressor Rok</fullName>
    </recommendedName>
</protein>
<name>ROK_BACSU</name>
<reference key="1">
    <citation type="submission" date="1997-11" db="EMBL/GenBank/DDBJ databases">
        <title>Sequence of the Bacillus subtilis chromosome from ykuA to cse-15.</title>
        <authorList>
            <person name="Scanlan E."/>
            <person name="Devine K.M."/>
        </authorList>
    </citation>
    <scope>NUCLEOTIDE SEQUENCE [GENOMIC DNA]</scope>
    <source>
        <strain>168</strain>
    </source>
</reference>
<reference key="2">
    <citation type="journal article" date="1997" name="Nature">
        <title>The complete genome sequence of the Gram-positive bacterium Bacillus subtilis.</title>
        <authorList>
            <person name="Kunst F."/>
            <person name="Ogasawara N."/>
            <person name="Moszer I."/>
            <person name="Albertini A.M."/>
            <person name="Alloni G."/>
            <person name="Azevedo V."/>
            <person name="Bertero M.G."/>
            <person name="Bessieres P."/>
            <person name="Bolotin A."/>
            <person name="Borchert S."/>
            <person name="Borriss R."/>
            <person name="Boursier L."/>
            <person name="Brans A."/>
            <person name="Braun M."/>
            <person name="Brignell S.C."/>
            <person name="Bron S."/>
            <person name="Brouillet S."/>
            <person name="Bruschi C.V."/>
            <person name="Caldwell B."/>
            <person name="Capuano V."/>
            <person name="Carter N.M."/>
            <person name="Choi S.-K."/>
            <person name="Codani J.-J."/>
            <person name="Connerton I.F."/>
            <person name="Cummings N.J."/>
            <person name="Daniel R.A."/>
            <person name="Denizot F."/>
            <person name="Devine K.M."/>
            <person name="Duesterhoeft A."/>
            <person name="Ehrlich S.D."/>
            <person name="Emmerson P.T."/>
            <person name="Entian K.-D."/>
            <person name="Errington J."/>
            <person name="Fabret C."/>
            <person name="Ferrari E."/>
            <person name="Foulger D."/>
            <person name="Fritz C."/>
            <person name="Fujita M."/>
            <person name="Fujita Y."/>
            <person name="Fuma S."/>
            <person name="Galizzi A."/>
            <person name="Galleron N."/>
            <person name="Ghim S.-Y."/>
            <person name="Glaser P."/>
            <person name="Goffeau A."/>
            <person name="Golightly E.J."/>
            <person name="Grandi G."/>
            <person name="Guiseppi G."/>
            <person name="Guy B.J."/>
            <person name="Haga K."/>
            <person name="Haiech J."/>
            <person name="Harwood C.R."/>
            <person name="Henaut A."/>
            <person name="Hilbert H."/>
            <person name="Holsappel S."/>
            <person name="Hosono S."/>
            <person name="Hullo M.-F."/>
            <person name="Itaya M."/>
            <person name="Jones L.-M."/>
            <person name="Joris B."/>
            <person name="Karamata D."/>
            <person name="Kasahara Y."/>
            <person name="Klaerr-Blanchard M."/>
            <person name="Klein C."/>
            <person name="Kobayashi Y."/>
            <person name="Koetter P."/>
            <person name="Koningstein G."/>
            <person name="Krogh S."/>
            <person name="Kumano M."/>
            <person name="Kurita K."/>
            <person name="Lapidus A."/>
            <person name="Lardinois S."/>
            <person name="Lauber J."/>
            <person name="Lazarevic V."/>
            <person name="Lee S.-M."/>
            <person name="Levine A."/>
            <person name="Liu H."/>
            <person name="Masuda S."/>
            <person name="Mauel C."/>
            <person name="Medigue C."/>
            <person name="Medina N."/>
            <person name="Mellado R.P."/>
            <person name="Mizuno M."/>
            <person name="Moestl D."/>
            <person name="Nakai S."/>
            <person name="Noback M."/>
            <person name="Noone D."/>
            <person name="O'Reilly M."/>
            <person name="Ogawa K."/>
            <person name="Ogiwara A."/>
            <person name="Oudega B."/>
            <person name="Park S.-H."/>
            <person name="Parro V."/>
            <person name="Pohl T.M."/>
            <person name="Portetelle D."/>
            <person name="Porwollik S."/>
            <person name="Prescott A.M."/>
            <person name="Presecan E."/>
            <person name="Pujic P."/>
            <person name="Purnelle B."/>
            <person name="Rapoport G."/>
            <person name="Rey M."/>
            <person name="Reynolds S."/>
            <person name="Rieger M."/>
            <person name="Rivolta C."/>
            <person name="Rocha E."/>
            <person name="Roche B."/>
            <person name="Rose M."/>
            <person name="Sadaie Y."/>
            <person name="Sato T."/>
            <person name="Scanlan E."/>
            <person name="Schleich S."/>
            <person name="Schroeter R."/>
            <person name="Scoffone F."/>
            <person name="Sekiguchi J."/>
            <person name="Sekowska A."/>
            <person name="Seror S.J."/>
            <person name="Serror P."/>
            <person name="Shin B.-S."/>
            <person name="Soldo B."/>
            <person name="Sorokin A."/>
            <person name="Tacconi E."/>
            <person name="Takagi T."/>
            <person name="Takahashi H."/>
            <person name="Takemaru K."/>
            <person name="Takeuchi M."/>
            <person name="Tamakoshi A."/>
            <person name="Tanaka T."/>
            <person name="Terpstra P."/>
            <person name="Tognoni A."/>
            <person name="Tosato V."/>
            <person name="Uchiyama S."/>
            <person name="Vandenbol M."/>
            <person name="Vannier F."/>
            <person name="Vassarotti A."/>
            <person name="Viari A."/>
            <person name="Wambutt R."/>
            <person name="Wedler E."/>
            <person name="Wedler H."/>
            <person name="Weitzenegger T."/>
            <person name="Winters P."/>
            <person name="Wipat A."/>
            <person name="Yamamoto H."/>
            <person name="Yamane K."/>
            <person name="Yasumoto K."/>
            <person name="Yata K."/>
            <person name="Yoshida K."/>
            <person name="Yoshikawa H.-F."/>
            <person name="Zumstein E."/>
            <person name="Yoshikawa H."/>
            <person name="Danchin A."/>
        </authorList>
    </citation>
    <scope>NUCLEOTIDE SEQUENCE [LARGE SCALE GENOMIC DNA]</scope>
    <source>
        <strain>168</strain>
    </source>
</reference>
<reference key="3">
    <citation type="journal article" date="2002" name="Mol. Microbiol.">
        <title>Rok (YkuW) regulates genetic competence in Bacillus subtilis by directly repressing comK.</title>
        <authorList>
            <person name="Hoa T.T."/>
            <person name="Tortosa P."/>
            <person name="Albano M."/>
            <person name="Dubnau D."/>
        </authorList>
    </citation>
    <scope>FUNCTION</scope>
    <scope>GENE NAME</scope>
    <scope>INDUCTION</scope>
    <scope>DISRUPTION PHENOTYPE</scope>
    <scope>DNA-BINDING</scope>
    <source>
        <strain>BD630</strain>
    </source>
</reference>
<reference key="4">
    <citation type="journal article" date="2005" name="J. Bacteriol.">
        <title>The Rok protein of Bacillus subtilis represses genes for cell surface and extracellular functions.</title>
        <authorList>
            <person name="Albano M."/>
            <person name="Smits W.K."/>
            <person name="Ho L.T."/>
            <person name="Kraigher B."/>
            <person name="Mandic-Mulec I."/>
            <person name="Kuipers O.P."/>
            <person name="Dubnau D."/>
        </authorList>
    </citation>
    <scope>FUNCTION</scope>
    <scope>DNA-BINDING</scope>
    <scope>REGULON</scope>
    <source>
        <strain>168</strain>
    </source>
</reference>
<reference key="5">
    <citation type="journal article" date="2010" name="PLoS Genet.">
        <title>The transcriptional regulator Rok binds A+T-rich DNA and is involved in repression of a mobile genetic element in Bacillus subtilis.</title>
        <authorList>
            <person name="Smits W.K."/>
            <person name="Grossman A.D."/>
        </authorList>
    </citation>
    <scope>FUNCTION</scope>
    <scope>SUBCELLULAR LOCATION</scope>
    <scope>INDUCTION</scope>
    <scope>DOMAIN</scope>
    <scope>DISRUPTION PHENOTYPE</scope>
    <scope>DNA-BINDING</scope>
    <source>
        <strain>168</strain>
        <strain>168 / JH642</strain>
    </source>
</reference>
<keyword id="KW-0002">3D-structure</keyword>
<keyword id="KW-0175">Coiled coil</keyword>
<keyword id="KW-0963">Cytoplasm</keyword>
<keyword id="KW-0238">DNA-binding</keyword>
<keyword id="KW-1185">Reference proteome</keyword>
<keyword id="KW-0678">Repressor</keyword>
<keyword id="KW-0804">Transcription</keyword>
<keyword id="KW-0805">Transcription regulation</keyword>
<feature type="chain" id="PRO_0000097399" description="Repressor Rok">
    <location>
        <begin position="1"/>
        <end position="191"/>
    </location>
</feature>
<feature type="region of interest" description="Disordered" evidence="2">
    <location>
        <begin position="75"/>
        <end position="116"/>
    </location>
</feature>
<feature type="region of interest" description="DNA-binding" evidence="5">
    <location>
        <begin position="95"/>
        <end position="191"/>
    </location>
</feature>
<feature type="coiled-coil region" evidence="1">
    <location>
        <begin position="2"/>
        <end position="43"/>
    </location>
</feature>
<feature type="compositionally biased region" description="Low complexity" evidence="2">
    <location>
        <begin position="75"/>
        <end position="96"/>
    </location>
</feature>
<feature type="helix" evidence="9">
    <location>
        <begin position="107"/>
        <end position="109"/>
    </location>
</feature>
<feature type="helix" evidence="8">
    <location>
        <begin position="118"/>
        <end position="129"/>
    </location>
</feature>
<feature type="helix" evidence="8">
    <location>
        <begin position="137"/>
        <end position="148"/>
    </location>
</feature>
<feature type="helix" evidence="8">
    <location>
        <begin position="155"/>
        <end position="165"/>
    </location>
</feature>
<feature type="strand" evidence="8">
    <location>
        <begin position="169"/>
        <end position="173"/>
    </location>
</feature>
<feature type="strand" evidence="8">
    <location>
        <begin position="176"/>
        <end position="179"/>
    </location>
</feature>
<feature type="helix" evidence="8">
    <location>
        <begin position="183"/>
        <end position="186"/>
    </location>
</feature>
<sequence>MFNEREALRLRLEQLNEAEVKVIREYQIERDKIYAKLRELDRNGSPSEIKKDFRSEKKPDSLPVLAELAAQEIRSYQPQSQQQSVQPQLQSISSLPAGIPDGTTRRRRGTARPGSKAAKLREAAIKTLKRHNAAIKSSELQKEIEKESGLEIPNMTTFMQSLIKMYPEVKKPYRGQYILEGEIESAESANE</sequence>